<feature type="chain" id="PRO_0000324461" description="Stress response protein NST1">
    <location>
        <begin position="1"/>
        <end position="1334"/>
    </location>
</feature>
<feature type="region of interest" description="Disordered" evidence="3">
    <location>
        <begin position="1"/>
        <end position="82"/>
    </location>
</feature>
<feature type="region of interest" description="Disordered" evidence="3">
    <location>
        <begin position="212"/>
        <end position="242"/>
    </location>
</feature>
<feature type="region of interest" description="Disordered" evidence="3">
    <location>
        <begin position="530"/>
        <end position="565"/>
    </location>
</feature>
<feature type="region of interest" description="Disordered" evidence="3">
    <location>
        <begin position="712"/>
        <end position="849"/>
    </location>
</feature>
<feature type="region of interest" description="Disordered" evidence="3">
    <location>
        <begin position="977"/>
        <end position="996"/>
    </location>
</feature>
<feature type="coiled-coil region" evidence="2">
    <location>
        <begin position="694"/>
        <end position="876"/>
    </location>
</feature>
<feature type="compositionally biased region" description="Basic residues" evidence="3">
    <location>
        <begin position="1"/>
        <end position="14"/>
    </location>
</feature>
<feature type="compositionally biased region" description="Low complexity" evidence="3">
    <location>
        <begin position="15"/>
        <end position="25"/>
    </location>
</feature>
<feature type="compositionally biased region" description="Acidic residues" evidence="3">
    <location>
        <begin position="538"/>
        <end position="555"/>
    </location>
</feature>
<feature type="compositionally biased region" description="Polar residues" evidence="3">
    <location>
        <begin position="981"/>
        <end position="996"/>
    </location>
</feature>
<proteinExistence type="inferred from homology"/>
<organism>
    <name type="scientific">Vanderwaltozyma polyspora (strain ATCC 22028 / DSM 70294 / BCRC 21397 / CBS 2163 / NBRC 10782 / NRRL Y-8283 / UCD 57-17)</name>
    <name type="common">Kluyveromyces polysporus</name>
    <dbReference type="NCBI Taxonomy" id="436907"/>
    <lineage>
        <taxon>Eukaryota</taxon>
        <taxon>Fungi</taxon>
        <taxon>Dikarya</taxon>
        <taxon>Ascomycota</taxon>
        <taxon>Saccharomycotina</taxon>
        <taxon>Saccharomycetes</taxon>
        <taxon>Saccharomycetales</taxon>
        <taxon>Saccharomycetaceae</taxon>
        <taxon>Vanderwaltozyma</taxon>
    </lineage>
</organism>
<name>NST1_VANPO</name>
<gene>
    <name type="primary">NST1</name>
    <name type="ORF">Kpol_1029p17</name>
</gene>
<protein>
    <recommendedName>
        <fullName>Stress response protein NST1</fullName>
    </recommendedName>
</protein>
<dbReference type="EMBL" id="DS480471">
    <property type="protein sequence ID" value="EDO15243.1"/>
    <property type="molecule type" value="Genomic_DNA"/>
</dbReference>
<dbReference type="RefSeq" id="XP_001643101.1">
    <property type="nucleotide sequence ID" value="XM_001643051.1"/>
</dbReference>
<dbReference type="SMR" id="A7TR75"/>
<dbReference type="FunCoup" id="A7TR75">
    <property type="interactions" value="32"/>
</dbReference>
<dbReference type="GeneID" id="5543303"/>
<dbReference type="KEGG" id="vpo:Kpol_1029p17"/>
<dbReference type="eggNOG" id="KOG0516">
    <property type="taxonomic scope" value="Eukaryota"/>
</dbReference>
<dbReference type="HOGENOM" id="CLU_267374_0_0_1"/>
<dbReference type="InParanoid" id="A7TR75"/>
<dbReference type="OMA" id="TLDSHWE"/>
<dbReference type="OrthoDB" id="21629at2759"/>
<dbReference type="PhylomeDB" id="A7TR75"/>
<dbReference type="Proteomes" id="UP000000267">
    <property type="component" value="Unassembled WGS sequence"/>
</dbReference>
<dbReference type="GO" id="GO:0015630">
    <property type="term" value="C:microtubule cytoskeleton"/>
    <property type="evidence" value="ECO:0007669"/>
    <property type="project" value="TreeGrafter"/>
</dbReference>
<dbReference type="GO" id="GO:0000932">
    <property type="term" value="C:P-body"/>
    <property type="evidence" value="ECO:0007669"/>
    <property type="project" value="EnsemblFungi"/>
</dbReference>
<dbReference type="GO" id="GO:0000226">
    <property type="term" value="P:microtubule cytoskeleton organization"/>
    <property type="evidence" value="ECO:0007669"/>
    <property type="project" value="TreeGrafter"/>
</dbReference>
<dbReference type="GO" id="GO:0017148">
    <property type="term" value="P:negative regulation of translation"/>
    <property type="evidence" value="ECO:0007669"/>
    <property type="project" value="EnsemblFungi"/>
</dbReference>
<dbReference type="GO" id="GO:0009651">
    <property type="term" value="P:response to salt stress"/>
    <property type="evidence" value="ECO:0007669"/>
    <property type="project" value="EnsemblFungi"/>
</dbReference>
<dbReference type="InterPro" id="IPR051483">
    <property type="entry name" value="MAP7_domain-containing"/>
</dbReference>
<dbReference type="InterPro" id="IPR025279">
    <property type="entry name" value="NST1"/>
</dbReference>
<dbReference type="PANTHER" id="PTHR15073">
    <property type="entry name" value="MICROTUBULE-ASSOCIATED PROTEIN"/>
    <property type="match status" value="1"/>
</dbReference>
<dbReference type="PANTHER" id="PTHR15073:SF1">
    <property type="entry name" value="RETICULOCYTE-BINDING PROTEIN HOMOLOG 2A"/>
    <property type="match status" value="1"/>
</dbReference>
<dbReference type="Pfam" id="PF13945">
    <property type="entry name" value="NST1"/>
    <property type="match status" value="1"/>
</dbReference>
<comment type="function">
    <text evidence="1">May act as a negative regulator of salt tolerance.</text>
</comment>
<comment type="subcellular location">
    <subcellularLocation>
        <location evidence="1">Cytoplasm</location>
    </subcellularLocation>
</comment>
<comment type="similarity">
    <text evidence="4">Belongs to the NST1 family.</text>
</comment>
<reference key="1">
    <citation type="journal article" date="2007" name="Proc. Natl. Acad. Sci. U.S.A.">
        <title>Independent sorting-out of thousands of duplicated gene pairs in two yeast species descended from a whole-genome duplication.</title>
        <authorList>
            <person name="Scannell D.R."/>
            <person name="Frank A.C."/>
            <person name="Conant G.C."/>
            <person name="Byrne K.P."/>
            <person name="Woolfit M."/>
            <person name="Wolfe K.H."/>
        </authorList>
    </citation>
    <scope>NUCLEOTIDE SEQUENCE [LARGE SCALE GENOMIC DNA]</scope>
    <source>
        <strain>ATCC 22028 / DSM 70294 / BCRC 21397 / CBS 2163 / NBRC 10782 / NRRL Y-8283 / UCD 57-17</strain>
    </source>
</reference>
<accession>A7TR75</accession>
<sequence>MPSHSKNKKRKSKSKGGSTVKKSGGLLEKGIGNITAELYNDTDDYPTSRVIKRAPNGDVIVESLPTKPKKSKSRQTNSSSNNDMILDLDSHWEWLSPEEKKNILRIDKDEVFEMLSRYNNHNSNNVNGNTNNNNIIGTGSNNLSGGISTNSNNNTSSSCNCNVCGRRHMAMDQEMERIYNRLYEMQRENYEDMTHIKFHLNIIKDLQKRKTQMISPPASPEMDSNNVDEAREPNSGSSNESLDIKNDLETMRDEVVKYFLSPNSVDTLKKEVLNFKHNKQKQFQTPISLNEDNTEEVVEDNEAQHIYDDLSNEIHDSGLIESPRTVEDDANIIDIESKSRYLNFAKTFISSHPTIAQEYVNKMIMYPEMKELTDDLMNNNGSGFIKAIEEFVLDKQKQNTLPDTEIDINDVNSQQHENPEEALQVQDLGDAKEFTTMLHNGQPLTSDEYANLQRHIAERVTDAYNTETKEFEGISQLEKELFTRFMHGSDRRQFGDSILQLFKNKYDDKLSANSISTSLAAAASTITHDIISPRNDDGNDTEEDIDYYDDEDDVSSENIHHRNDLDDDFKSREEYSDYNSDFHDNRKCEKYNDFDDDDDYLDNNRNLECAHAEHNHETLSTYHHDVDLADSNSHGYKNYASHHTSSQVSEDYIDDIDDDGYESGIDENERLEEGRKLLQITITKILQRRIMESYHAKQAENNRMKLLEELEAEESKKKEKEEKKQRKREKEKEKKRLLQVAKEEERKKKEEEAERLKKEAEEREMERRETQRKKVEAAKKKKDEEKKRKLEEQRKREEEQERQRKIKEEQKRKKDEERKQKELEKKKKDEEKRIQEEEKRKKEEEAEQKTLNEKKRLDVEIMEQKRLEEEEKRLKSTASTSNVPYAELLKMTPSLQPVSGNINDELFGMINAATSSQSIPTSSSHLNHLLQQNDASHFNMTPRHDLLNPSGGMHFGPSDLIEQSHFTHKSNSFDTLAAINDPTTPQTTLPYGNSSVPPNSFDISSWGNFNGSSTAETQLQSQLPQQSLLGSHSVTSDQNRKSFNEELNTITNLLSTTGLEDQLSQKDSFAHSSLWGSQGTSLSGSNPNLSSNFAPAGLPINQTPISPGNIGIPTTTHRSSIWDISSGVDYSLNDNKITGSIQSERPLSNVIPSSYMSPNIWSGGTSKIPVIEQPLVFNPNENQTNPISNIILRELSLLTLPNSTDQYVSSELLCQKVMANRIDYGVYFTELMNLRNAHKIEIASNDNGQVTHVKLVYKSKDELEMPLNSSENQNSHIQMQQNYGLQPISSTTAGNTASTTANNANGSTINTSNSHFFNINKTISNPSVTANIWS</sequence>
<keyword id="KW-0175">Coiled coil</keyword>
<keyword id="KW-0963">Cytoplasm</keyword>
<keyword id="KW-1185">Reference proteome</keyword>
<keyword id="KW-0346">Stress response</keyword>
<evidence type="ECO:0000250" key="1"/>
<evidence type="ECO:0000255" key="2"/>
<evidence type="ECO:0000256" key="3">
    <source>
        <dbReference type="SAM" id="MobiDB-lite"/>
    </source>
</evidence>
<evidence type="ECO:0000305" key="4"/>